<gene>
    <name evidence="1 12" type="primary">aroA</name>
    <name type="ordered locus">b0908</name>
    <name type="ordered locus">JW0891</name>
</gene>
<evidence type="ECO:0000255" key="1">
    <source>
        <dbReference type="HAMAP-Rule" id="MF_00210"/>
    </source>
</evidence>
<evidence type="ECO:0000269" key="2">
    <source>
    </source>
</evidence>
<evidence type="ECO:0000269" key="3">
    <source>
    </source>
</evidence>
<evidence type="ECO:0000269" key="4">
    <source>
    </source>
</evidence>
<evidence type="ECO:0000269" key="5">
    <source>
    </source>
</evidence>
<evidence type="ECO:0000269" key="6">
    <source>
    </source>
</evidence>
<evidence type="ECO:0000269" key="7">
    <source>
    </source>
</evidence>
<evidence type="ECO:0000269" key="8">
    <source>
    </source>
</evidence>
<evidence type="ECO:0000269" key="9">
    <source>
    </source>
</evidence>
<evidence type="ECO:0000269" key="10">
    <source>
    </source>
</evidence>
<evidence type="ECO:0000269" key="11">
    <source>
    </source>
</evidence>
<evidence type="ECO:0000303" key="12">
    <source ref="1"/>
</evidence>
<evidence type="ECO:0000305" key="13"/>
<evidence type="ECO:0000305" key="14">
    <source>
    </source>
</evidence>
<evidence type="ECO:0007744" key="15">
    <source>
        <dbReference type="PDB" id="1EPS"/>
    </source>
</evidence>
<evidence type="ECO:0007744" key="16">
    <source>
        <dbReference type="PDB" id="1G6S"/>
    </source>
</evidence>
<evidence type="ECO:0007744" key="17">
    <source>
        <dbReference type="PDB" id="1G6T"/>
    </source>
</evidence>
<evidence type="ECO:0007744" key="18">
    <source>
        <dbReference type="PDB" id="1MI4"/>
    </source>
</evidence>
<evidence type="ECO:0007744" key="19">
    <source>
        <dbReference type="PDB" id="1P88"/>
    </source>
</evidence>
<evidence type="ECO:0007744" key="20">
    <source>
        <dbReference type="PDB" id="1Q36"/>
    </source>
</evidence>
<evidence type="ECO:0007744" key="21">
    <source>
        <dbReference type="PDB" id="1X8R"/>
    </source>
</evidence>
<evidence type="ECO:0007744" key="22">
    <source>
        <dbReference type="PDB" id="1X8T"/>
    </source>
</evidence>
<evidence type="ECO:0007744" key="23">
    <source>
        <dbReference type="PDB" id="2AA9"/>
    </source>
</evidence>
<evidence type="ECO:0007744" key="24">
    <source>
        <dbReference type="PDB" id="2AAY"/>
    </source>
</evidence>
<evidence type="ECO:0007744" key="25">
    <source>
        <dbReference type="PDB" id="2PQ9"/>
    </source>
</evidence>
<evidence type="ECO:0007744" key="26">
    <source>
        <dbReference type="PDB" id="2QFQ"/>
    </source>
</evidence>
<evidence type="ECO:0007744" key="27">
    <source>
        <dbReference type="PDB" id="2QFS"/>
    </source>
</evidence>
<evidence type="ECO:0007744" key="28">
    <source>
        <dbReference type="PDB" id="2QFT"/>
    </source>
</evidence>
<evidence type="ECO:0007744" key="29">
    <source>
        <dbReference type="PDB" id="2QFU"/>
    </source>
</evidence>
<evidence type="ECO:0007744" key="30">
    <source>
        <dbReference type="PDB" id="3FJX"/>
    </source>
</evidence>
<evidence type="ECO:0007744" key="31">
    <source>
        <dbReference type="PDB" id="3FJZ"/>
    </source>
</evidence>
<evidence type="ECO:0007744" key="32">
    <source>
        <dbReference type="PDB" id="3FK0"/>
    </source>
</evidence>
<evidence type="ECO:0007744" key="33">
    <source>
        <dbReference type="PDB" id="3FK1"/>
    </source>
</evidence>
<evidence type="ECO:0007829" key="34">
    <source>
        <dbReference type="PDB" id="1G6S"/>
    </source>
</evidence>
<evidence type="ECO:0007829" key="35">
    <source>
        <dbReference type="PDB" id="1P88"/>
    </source>
</evidence>
<protein>
    <recommendedName>
        <fullName evidence="1">3-phosphoshikimate 1-carboxyvinyltransferase</fullName>
        <ecNumber evidence="1 3 4 6 7 10 11">2.5.1.19</ecNumber>
    </recommendedName>
    <alternativeName>
        <fullName evidence="1 12">5-enolpyruvylshikimate-3-phosphate synthase</fullName>
        <shortName evidence="1 12">EPSP synthase</shortName>
        <shortName evidence="1 13">EPSPS</shortName>
    </alternativeName>
</protein>
<name>AROA_ECOLI</name>
<dbReference type="EC" id="2.5.1.19" evidence="1 3 4 6 7 10 11"/>
<dbReference type="EMBL" id="X00557">
    <property type="protein sequence ID" value="CAA25223.1"/>
    <property type="molecule type" value="Genomic_DNA"/>
</dbReference>
<dbReference type="EMBL" id="U00096">
    <property type="protein sequence ID" value="AAC73994.1"/>
    <property type="molecule type" value="Genomic_DNA"/>
</dbReference>
<dbReference type="EMBL" id="AP009048">
    <property type="protein sequence ID" value="BAA35643.1"/>
    <property type="molecule type" value="Genomic_DNA"/>
</dbReference>
<dbReference type="EMBL" id="U31523">
    <property type="protein sequence ID" value="AAA81514.1"/>
    <property type="molecule type" value="Genomic_DNA"/>
</dbReference>
<dbReference type="PIR" id="C64830">
    <property type="entry name" value="XUECVS"/>
</dbReference>
<dbReference type="RefSeq" id="NP_415428.1">
    <property type="nucleotide sequence ID" value="NC_000913.3"/>
</dbReference>
<dbReference type="RefSeq" id="WP_000445231.1">
    <property type="nucleotide sequence ID" value="NZ_STEB01000006.1"/>
</dbReference>
<dbReference type="PDB" id="1EPS">
    <property type="method" value="X-ray"/>
    <property type="resolution" value="3.00 A"/>
    <property type="chains" value="A=1-427"/>
</dbReference>
<dbReference type="PDB" id="1G6S">
    <property type="method" value="X-ray"/>
    <property type="resolution" value="1.50 A"/>
    <property type="chains" value="A=1-427"/>
</dbReference>
<dbReference type="PDB" id="1G6T">
    <property type="method" value="X-ray"/>
    <property type="resolution" value="1.60 A"/>
    <property type="chains" value="A=1-427"/>
</dbReference>
<dbReference type="PDB" id="1MI4">
    <property type="method" value="X-ray"/>
    <property type="resolution" value="1.70 A"/>
    <property type="chains" value="A=1-427"/>
</dbReference>
<dbReference type="PDB" id="1P88">
    <property type="method" value="NMR"/>
    <property type="chains" value="A=25-240"/>
</dbReference>
<dbReference type="PDB" id="1P89">
    <property type="method" value="NMR"/>
    <property type="chains" value="A=25-240"/>
</dbReference>
<dbReference type="PDB" id="1Q36">
    <property type="method" value="X-ray"/>
    <property type="resolution" value="1.60 A"/>
    <property type="chains" value="A=1-427"/>
</dbReference>
<dbReference type="PDB" id="1X8R">
    <property type="method" value="X-ray"/>
    <property type="resolution" value="1.50 A"/>
    <property type="chains" value="A=1-427"/>
</dbReference>
<dbReference type="PDB" id="1X8T">
    <property type="method" value="X-ray"/>
    <property type="resolution" value="1.90 A"/>
    <property type="chains" value="A=1-427"/>
</dbReference>
<dbReference type="PDB" id="2AA9">
    <property type="method" value="X-ray"/>
    <property type="resolution" value="1.50 A"/>
    <property type="chains" value="A=1-427"/>
</dbReference>
<dbReference type="PDB" id="2AAY">
    <property type="method" value="X-ray"/>
    <property type="resolution" value="1.55 A"/>
    <property type="chains" value="A=1-427"/>
</dbReference>
<dbReference type="PDB" id="2PQ9">
    <property type="method" value="X-ray"/>
    <property type="resolution" value="1.60 A"/>
    <property type="chains" value="A=1-427"/>
</dbReference>
<dbReference type="PDB" id="2QFQ">
    <property type="method" value="X-ray"/>
    <property type="resolution" value="1.50 A"/>
    <property type="chains" value="A=1-427"/>
</dbReference>
<dbReference type="PDB" id="2QFS">
    <property type="method" value="X-ray"/>
    <property type="resolution" value="1.55 A"/>
    <property type="chains" value="A=1-427"/>
</dbReference>
<dbReference type="PDB" id="2QFT">
    <property type="method" value="X-ray"/>
    <property type="resolution" value="1.55 A"/>
    <property type="chains" value="A=1-427"/>
</dbReference>
<dbReference type="PDB" id="2QFU">
    <property type="method" value="X-ray"/>
    <property type="resolution" value="1.60 A"/>
    <property type="chains" value="A=1-427"/>
</dbReference>
<dbReference type="PDB" id="3FJX">
    <property type="method" value="X-ray"/>
    <property type="resolution" value="1.75 A"/>
    <property type="chains" value="A=1-427"/>
</dbReference>
<dbReference type="PDB" id="3FJZ">
    <property type="method" value="X-ray"/>
    <property type="resolution" value="1.70 A"/>
    <property type="chains" value="A=1-427"/>
</dbReference>
<dbReference type="PDB" id="3FK0">
    <property type="method" value="X-ray"/>
    <property type="resolution" value="1.70 A"/>
    <property type="chains" value="A=1-427"/>
</dbReference>
<dbReference type="PDB" id="3FK1">
    <property type="method" value="X-ray"/>
    <property type="resolution" value="1.70 A"/>
    <property type="chains" value="A=1-427"/>
</dbReference>
<dbReference type="PDBsum" id="1EPS"/>
<dbReference type="PDBsum" id="1G6S"/>
<dbReference type="PDBsum" id="1G6T"/>
<dbReference type="PDBsum" id="1MI4"/>
<dbReference type="PDBsum" id="1P88"/>
<dbReference type="PDBsum" id="1P89"/>
<dbReference type="PDBsum" id="1Q36"/>
<dbReference type="PDBsum" id="1X8R"/>
<dbReference type="PDBsum" id="1X8T"/>
<dbReference type="PDBsum" id="2AA9"/>
<dbReference type="PDBsum" id="2AAY"/>
<dbReference type="PDBsum" id="2PQ9"/>
<dbReference type="PDBsum" id="2QFQ"/>
<dbReference type="PDBsum" id="2QFS"/>
<dbReference type="PDBsum" id="2QFT"/>
<dbReference type="PDBsum" id="2QFU"/>
<dbReference type="PDBsum" id="3FJX"/>
<dbReference type="PDBsum" id="3FJZ"/>
<dbReference type="PDBsum" id="3FK0"/>
<dbReference type="PDBsum" id="3FK1"/>
<dbReference type="SMR" id="P0A6D3"/>
<dbReference type="BioGRID" id="4260011">
    <property type="interactions" value="13"/>
</dbReference>
<dbReference type="DIP" id="DIP-48256N"/>
<dbReference type="FunCoup" id="P0A6D3">
    <property type="interactions" value="655"/>
</dbReference>
<dbReference type="IntAct" id="P0A6D3">
    <property type="interactions" value="3"/>
</dbReference>
<dbReference type="STRING" id="511145.b0908"/>
<dbReference type="BindingDB" id="P0A6D3"/>
<dbReference type="ChEMBL" id="CHEMBL5033"/>
<dbReference type="DrugBank" id="DB03116">
    <property type="generic name" value="5-(1-Carboxy-1-Phosphonooxy-Ethoxyl)-Shikimate-3-Phosphate"/>
</dbReference>
<dbReference type="DrugBank" id="DB01942">
    <property type="generic name" value="Formic acid"/>
</dbReference>
<dbReference type="DrugBank" id="DB04539">
    <property type="generic name" value="Glyphosate"/>
</dbReference>
<dbReference type="DrugBank" id="DB04328">
    <property type="generic name" value="Shikimate-3-Phosphate"/>
</dbReference>
<dbReference type="jPOST" id="P0A6D3"/>
<dbReference type="PaxDb" id="511145-b0908"/>
<dbReference type="EnsemblBacteria" id="AAC73994">
    <property type="protein sequence ID" value="AAC73994"/>
    <property type="gene ID" value="b0908"/>
</dbReference>
<dbReference type="GeneID" id="93776510"/>
<dbReference type="GeneID" id="945528"/>
<dbReference type="KEGG" id="ecj:JW0891"/>
<dbReference type="KEGG" id="eco:b0908"/>
<dbReference type="KEGG" id="ecoc:C3026_05600"/>
<dbReference type="PATRIC" id="fig|1411691.4.peg.1368"/>
<dbReference type="EchoBASE" id="EB0071"/>
<dbReference type="eggNOG" id="COG0128">
    <property type="taxonomic scope" value="Bacteria"/>
</dbReference>
<dbReference type="HOGENOM" id="CLU_024321_0_0_6"/>
<dbReference type="InParanoid" id="P0A6D3"/>
<dbReference type="OMA" id="YEDHRMA"/>
<dbReference type="OrthoDB" id="9809920at2"/>
<dbReference type="PhylomeDB" id="P0A6D3"/>
<dbReference type="BioCyc" id="EcoCyc:AROA-MONOMER"/>
<dbReference type="BioCyc" id="MetaCyc:AROA-MONOMER"/>
<dbReference type="BRENDA" id="2.5.1.19">
    <property type="organism ID" value="2026"/>
</dbReference>
<dbReference type="SABIO-RK" id="P0A6D3"/>
<dbReference type="UniPathway" id="UPA00053">
    <property type="reaction ID" value="UER00089"/>
</dbReference>
<dbReference type="EvolutionaryTrace" id="P0A6D3"/>
<dbReference type="PRO" id="PR:P0A6D3"/>
<dbReference type="Proteomes" id="UP000000625">
    <property type="component" value="Chromosome"/>
</dbReference>
<dbReference type="GO" id="GO:0005829">
    <property type="term" value="C:cytosol"/>
    <property type="evidence" value="ECO:0000314"/>
    <property type="project" value="EcoCyc"/>
</dbReference>
<dbReference type="GO" id="GO:0003866">
    <property type="term" value="F:3-phosphoshikimate 1-carboxyvinyltransferase activity"/>
    <property type="evidence" value="ECO:0000314"/>
    <property type="project" value="UniProtKB"/>
</dbReference>
<dbReference type="GO" id="GO:0008652">
    <property type="term" value="P:amino acid biosynthetic process"/>
    <property type="evidence" value="ECO:0007669"/>
    <property type="project" value="UniProtKB-KW"/>
</dbReference>
<dbReference type="GO" id="GO:0009073">
    <property type="term" value="P:aromatic amino acid family biosynthetic process"/>
    <property type="evidence" value="ECO:0007669"/>
    <property type="project" value="UniProtKB-KW"/>
</dbReference>
<dbReference type="GO" id="GO:0009423">
    <property type="term" value="P:chorismate biosynthetic process"/>
    <property type="evidence" value="ECO:0000314"/>
    <property type="project" value="EcoCyc"/>
</dbReference>
<dbReference type="CDD" id="cd01554">
    <property type="entry name" value="EPT-like"/>
    <property type="match status" value="1"/>
</dbReference>
<dbReference type="FunFam" id="3.65.10.10:FF:000003">
    <property type="entry name" value="3-phosphoshikimate 1-carboxyvinyltransferase"/>
    <property type="match status" value="1"/>
</dbReference>
<dbReference type="FunFam" id="3.65.10.10:FF:000004">
    <property type="entry name" value="3-phosphoshikimate 1-carboxyvinyltransferase"/>
    <property type="match status" value="1"/>
</dbReference>
<dbReference type="Gene3D" id="3.65.10.10">
    <property type="entry name" value="Enolpyruvate transferase domain"/>
    <property type="match status" value="2"/>
</dbReference>
<dbReference type="HAMAP" id="MF_00210">
    <property type="entry name" value="EPSP_synth"/>
    <property type="match status" value="1"/>
</dbReference>
<dbReference type="InterPro" id="IPR001986">
    <property type="entry name" value="Enolpyruvate_Tfrase_dom"/>
</dbReference>
<dbReference type="InterPro" id="IPR036968">
    <property type="entry name" value="Enolpyruvate_Tfrase_sf"/>
</dbReference>
<dbReference type="InterPro" id="IPR006264">
    <property type="entry name" value="EPSP_synthase"/>
</dbReference>
<dbReference type="InterPro" id="IPR023193">
    <property type="entry name" value="EPSP_synthase_CS"/>
</dbReference>
<dbReference type="InterPro" id="IPR013792">
    <property type="entry name" value="RNA3'P_cycl/enolpyr_Trfase_a/b"/>
</dbReference>
<dbReference type="NCBIfam" id="TIGR01356">
    <property type="entry name" value="aroA"/>
    <property type="match status" value="1"/>
</dbReference>
<dbReference type="PANTHER" id="PTHR21090">
    <property type="entry name" value="AROM/DEHYDROQUINATE SYNTHASE"/>
    <property type="match status" value="1"/>
</dbReference>
<dbReference type="PANTHER" id="PTHR21090:SF5">
    <property type="entry name" value="PENTAFUNCTIONAL AROM POLYPEPTIDE"/>
    <property type="match status" value="1"/>
</dbReference>
<dbReference type="Pfam" id="PF00275">
    <property type="entry name" value="EPSP_synthase"/>
    <property type="match status" value="1"/>
</dbReference>
<dbReference type="PIRSF" id="PIRSF000505">
    <property type="entry name" value="EPSPS"/>
    <property type="match status" value="1"/>
</dbReference>
<dbReference type="SUPFAM" id="SSF55205">
    <property type="entry name" value="EPT/RTPC-like"/>
    <property type="match status" value="1"/>
</dbReference>
<dbReference type="PROSITE" id="PS00104">
    <property type="entry name" value="EPSP_SYNTHASE_1"/>
    <property type="match status" value="1"/>
</dbReference>
<dbReference type="PROSITE" id="PS00885">
    <property type="entry name" value="EPSP_SYNTHASE_2"/>
    <property type="match status" value="1"/>
</dbReference>
<keyword id="KW-0002">3D-structure</keyword>
<keyword id="KW-0028">Amino-acid biosynthesis</keyword>
<keyword id="KW-0057">Aromatic amino acid biosynthesis</keyword>
<keyword id="KW-0963">Cytoplasm</keyword>
<keyword id="KW-1185">Reference proteome</keyword>
<keyword id="KW-0808">Transferase</keyword>
<feature type="chain" id="PRO_0000088253" description="3-phosphoshikimate 1-carboxyvinyltransferase">
    <location>
        <begin position="1"/>
        <end position="427"/>
    </location>
</feature>
<feature type="active site" description="Proton acceptor" evidence="14">
    <location>
        <position position="313"/>
    </location>
</feature>
<feature type="binding site" evidence="2 16">
    <location>
        <position position="22"/>
    </location>
    <ligand>
        <name>3-phosphoshikimate</name>
        <dbReference type="ChEBI" id="CHEBI:145989"/>
    </ligand>
</feature>
<feature type="binding site" evidence="1">
    <location>
        <position position="22"/>
    </location>
    <ligand>
        <name>phosphoenolpyruvate</name>
        <dbReference type="ChEBI" id="CHEBI:58702"/>
    </ligand>
</feature>
<feature type="binding site" evidence="2 16">
    <location>
        <position position="23"/>
    </location>
    <ligand>
        <name>3-phosphoshikimate</name>
        <dbReference type="ChEBI" id="CHEBI:145989"/>
    </ligand>
</feature>
<feature type="binding site" evidence="2 16">
    <location>
        <position position="27"/>
    </location>
    <ligand>
        <name>3-phosphoshikimate</name>
        <dbReference type="ChEBI" id="CHEBI:145989"/>
    </ligand>
</feature>
<feature type="binding site" evidence="1">
    <location>
        <position position="96"/>
    </location>
    <ligand>
        <name>phosphoenolpyruvate</name>
        <dbReference type="ChEBI" id="CHEBI:58702"/>
    </ligand>
</feature>
<feature type="binding site" evidence="1">
    <location>
        <position position="124"/>
    </location>
    <ligand>
        <name>phosphoenolpyruvate</name>
        <dbReference type="ChEBI" id="CHEBI:58702"/>
    </ligand>
</feature>
<feature type="binding site" evidence="2 16">
    <location>
        <position position="169"/>
    </location>
    <ligand>
        <name>3-phosphoshikimate</name>
        <dbReference type="ChEBI" id="CHEBI:145989"/>
    </ligand>
</feature>
<feature type="binding site" evidence="2 16">
    <location>
        <position position="170"/>
    </location>
    <ligand>
        <name>3-phosphoshikimate</name>
        <dbReference type="ChEBI" id="CHEBI:145989"/>
    </ligand>
</feature>
<feature type="binding site" evidence="2 16">
    <location>
        <position position="171"/>
    </location>
    <ligand>
        <name>3-phosphoshikimate</name>
        <dbReference type="ChEBI" id="CHEBI:145989"/>
    </ligand>
</feature>
<feature type="binding site" evidence="1">
    <location>
        <position position="171"/>
    </location>
    <ligand>
        <name>phosphoenolpyruvate</name>
        <dbReference type="ChEBI" id="CHEBI:58702"/>
    </ligand>
</feature>
<feature type="binding site" evidence="2 16">
    <location>
        <position position="197"/>
    </location>
    <ligand>
        <name>3-phosphoshikimate</name>
        <dbReference type="ChEBI" id="CHEBI:145989"/>
    </ligand>
</feature>
<feature type="binding site" evidence="2 16">
    <location>
        <position position="313"/>
    </location>
    <ligand>
        <name>3-phosphoshikimate</name>
        <dbReference type="ChEBI" id="CHEBI:145989"/>
    </ligand>
</feature>
<feature type="binding site" evidence="2 16">
    <location>
        <position position="336"/>
    </location>
    <ligand>
        <name>3-phosphoshikimate</name>
        <dbReference type="ChEBI" id="CHEBI:145989"/>
    </ligand>
</feature>
<feature type="binding site" evidence="2 16">
    <location>
        <position position="340"/>
    </location>
    <ligand>
        <name>3-phosphoshikimate</name>
        <dbReference type="ChEBI" id="CHEBI:145989"/>
    </ligand>
</feature>
<feature type="binding site" evidence="1">
    <location>
        <position position="344"/>
    </location>
    <ligand>
        <name>phosphoenolpyruvate</name>
        <dbReference type="ChEBI" id="CHEBI:58702"/>
    </ligand>
</feature>
<feature type="binding site" evidence="1">
    <location>
        <position position="386"/>
    </location>
    <ligand>
        <name>phosphoenolpyruvate</name>
        <dbReference type="ChEBI" id="CHEBI:58702"/>
    </ligand>
</feature>
<feature type="binding site" evidence="1">
    <location>
        <position position="411"/>
    </location>
    <ligand>
        <name>phosphoenolpyruvate</name>
        <dbReference type="ChEBI" id="CHEBI:58702"/>
    </ligand>
</feature>
<feature type="site" description="Modified by bromopyruvate" evidence="2">
    <location>
        <position position="408"/>
    </location>
</feature>
<feature type="site" description="Modified by bromopyruvate" evidence="2">
    <location>
        <position position="411"/>
    </location>
</feature>
<feature type="mutagenesis site" description="Insensitive to glyphosate with unaltered affinity for its first substrate S3P, but displays a 30-fold lower affinity for its second substrate PEP." evidence="3">
    <original>G</original>
    <variation>A</variation>
    <location>
        <position position="96"/>
    </location>
</feature>
<feature type="mutagenesis site" description="This mutant is sensitive to glyphosate and causes a substantial decrease in the affinity for PEP. Is insensitive to glyphosate but maintains high affinity for PEP; when associated with S-101." evidence="10">
    <original>T</original>
    <variation>I</variation>
    <location>
        <position position="97"/>
    </location>
</feature>
<feature type="mutagenesis site" description="Displays a slight decrease of the affinity binding for both S3P and PEP. Decreases the binding affinity of glyphosate, reducing the potency of this inhibitor." evidence="7 10">
    <original>P</original>
    <variation>A</variation>
    <location>
        <position position="101"/>
    </location>
</feature>
<feature type="mutagenesis site" description="Displays a slight decrease of the affinity binding for both S3P and PEP. Decreases the binding affinity of glyphosate, reducing the potency of this inhibitor." evidence="7 10">
    <original>P</original>
    <variation>G</variation>
    <location>
        <position position="101"/>
    </location>
</feature>
<feature type="mutagenesis site" description="Displays a 2-fold lower affinity binding for both S3P and PEP. Decreases the binding affinity of glyphosate, reducing the potency of this inhibitor." evidence="7 10">
    <original>P</original>
    <variation>L</variation>
    <location>
        <position position="101"/>
    </location>
</feature>
<feature type="mutagenesis site" description="Displays a slight decrease of the affinity binding for both S3P and PEP. Decreases the binding affinity of glyphosate, reducing the potency of this inhibitor. Is insensitive to glyphosate but maintains high affinity for PEP; when associated with I-97." evidence="7 10">
    <original>P</original>
    <variation>S</variation>
    <location>
        <position position="101"/>
    </location>
</feature>
<feature type="mutagenesis site" description="The enolpyruvyl transfer reaction is halted after formation of the tetrahedral adduct of the substrates." evidence="4">
    <original>D</original>
    <variation>A</variation>
    <location>
        <position position="313"/>
    </location>
</feature>
<feature type="sequence conflict" description="In Ref. 1; CAA25223." evidence="13" ref="1">
    <original>S</original>
    <variation>T</variation>
    <location>
        <position position="23"/>
    </location>
</feature>
<feature type="sequence conflict" description="In Ref. 1; CAA25223." evidence="13" ref="1">
    <original>T</original>
    <variation>R</variation>
    <location>
        <position position="330"/>
    </location>
</feature>
<feature type="strand" evidence="34">
    <location>
        <begin position="3"/>
        <end position="6"/>
    </location>
</feature>
<feature type="strand" evidence="34">
    <location>
        <begin position="11"/>
        <end position="17"/>
    </location>
</feature>
<feature type="helix" evidence="34">
    <location>
        <begin position="22"/>
        <end position="34"/>
    </location>
</feature>
<feature type="strand" evidence="34">
    <location>
        <begin position="35"/>
        <end position="43"/>
    </location>
</feature>
<feature type="helix" evidence="34">
    <location>
        <begin position="48"/>
        <end position="59"/>
    </location>
</feature>
<feature type="strand" evidence="34">
    <location>
        <begin position="63"/>
        <end position="66"/>
    </location>
</feature>
<feature type="strand" evidence="35">
    <location>
        <begin position="68"/>
        <end position="70"/>
    </location>
</feature>
<feature type="strand" evidence="34">
    <location>
        <begin position="73"/>
        <end position="76"/>
    </location>
</feature>
<feature type="strand" evidence="35">
    <location>
        <begin position="79"/>
        <end position="81"/>
    </location>
</feature>
<feature type="strand" evidence="34">
    <location>
        <begin position="88"/>
        <end position="91"/>
    </location>
</feature>
<feature type="helix" evidence="34">
    <location>
        <begin position="96"/>
        <end position="105"/>
    </location>
</feature>
<feature type="strand" evidence="34">
    <location>
        <begin position="108"/>
        <end position="116"/>
    </location>
</feature>
<feature type="helix" evidence="34">
    <location>
        <begin position="119"/>
        <end position="123"/>
    </location>
</feature>
<feature type="helix" evidence="34">
    <location>
        <begin position="127"/>
        <end position="135"/>
    </location>
</feature>
<feature type="strand" evidence="34">
    <location>
        <begin position="140"/>
        <end position="145"/>
    </location>
</feature>
<feature type="strand" evidence="34">
    <location>
        <begin position="151"/>
        <end position="155"/>
    </location>
</feature>
<feature type="strand" evidence="34">
    <location>
        <begin position="160"/>
        <end position="168"/>
    </location>
</feature>
<feature type="helix" evidence="34">
    <location>
        <begin position="171"/>
        <end position="179"/>
    </location>
</feature>
<feature type="helix" evidence="34">
    <location>
        <begin position="180"/>
        <end position="182"/>
    </location>
</feature>
<feature type="strand" evidence="34">
    <location>
        <begin position="183"/>
        <end position="185"/>
    </location>
</feature>
<feature type="strand" evidence="34">
    <location>
        <begin position="187"/>
        <end position="195"/>
    </location>
</feature>
<feature type="helix" evidence="34">
    <location>
        <begin position="199"/>
        <end position="210"/>
    </location>
</feature>
<feature type="strand" evidence="34">
    <location>
        <begin position="216"/>
        <end position="218"/>
    </location>
</feature>
<feature type="turn" evidence="34">
    <location>
        <begin position="219"/>
        <end position="221"/>
    </location>
</feature>
<feature type="strand" evidence="34">
    <location>
        <begin position="222"/>
        <end position="225"/>
    </location>
</feature>
<feature type="strand" evidence="34">
    <location>
        <begin position="235"/>
        <end position="238"/>
    </location>
</feature>
<feature type="helix" evidence="34">
    <location>
        <begin position="243"/>
        <end position="256"/>
    </location>
</feature>
<feature type="strand" evidence="34">
    <location>
        <begin position="257"/>
        <end position="264"/>
    </location>
</feature>
<feature type="helix" evidence="34">
    <location>
        <begin position="272"/>
        <end position="275"/>
    </location>
</feature>
<feature type="helix" evidence="34">
    <location>
        <begin position="276"/>
        <end position="283"/>
    </location>
</feature>
<feature type="strand" evidence="34">
    <location>
        <begin position="286"/>
        <end position="289"/>
    </location>
</feature>
<feature type="strand" evidence="34">
    <location>
        <begin position="291"/>
        <end position="297"/>
    </location>
</feature>
<feature type="strand" evidence="34">
    <location>
        <begin position="305"/>
        <end position="307"/>
    </location>
</feature>
<feature type="turn" evidence="34">
    <location>
        <begin position="312"/>
        <end position="314"/>
    </location>
</feature>
<feature type="helix" evidence="34">
    <location>
        <begin position="315"/>
        <end position="321"/>
    </location>
</feature>
<feature type="helix" evidence="34">
    <location>
        <begin position="322"/>
        <end position="324"/>
    </location>
</feature>
<feature type="strand" evidence="34">
    <location>
        <begin position="325"/>
        <end position="327"/>
    </location>
</feature>
<feature type="strand" evidence="34">
    <location>
        <begin position="329"/>
        <end position="333"/>
    </location>
</feature>
<feature type="helix" evidence="34">
    <location>
        <begin position="335"/>
        <end position="339"/>
    </location>
</feature>
<feature type="strand" evidence="34">
    <location>
        <begin position="340"/>
        <end position="342"/>
    </location>
</feature>
<feature type="helix" evidence="34">
    <location>
        <begin position="344"/>
        <end position="354"/>
    </location>
</feature>
<feature type="strand" evidence="34">
    <location>
        <begin position="358"/>
        <end position="361"/>
    </location>
</feature>
<feature type="strand" evidence="34">
    <location>
        <begin position="363"/>
        <end position="369"/>
    </location>
</feature>
<feature type="helix" evidence="34">
    <location>
        <begin position="385"/>
        <end position="392"/>
    </location>
</feature>
<feature type="helix" evidence="34">
    <location>
        <begin position="393"/>
        <end position="395"/>
    </location>
</feature>
<feature type="strand" evidence="34">
    <location>
        <begin position="396"/>
        <end position="399"/>
    </location>
</feature>
<feature type="strand" evidence="34">
    <location>
        <begin position="401"/>
        <end position="405"/>
    </location>
</feature>
<feature type="helix" evidence="34">
    <location>
        <begin position="406"/>
        <end position="411"/>
    </location>
</feature>
<feature type="helix" evidence="34">
    <location>
        <begin position="416"/>
        <end position="423"/>
    </location>
</feature>
<proteinExistence type="evidence at protein level"/>
<accession>P0A6D3</accession>
<accession>P07638</accession>
<accession>P78222</accession>
<comment type="function">
    <text evidence="1 3 4 6 7 8 10 11">Catalyzes the transfer of the enolpyruvyl moiety of phosphoenolpyruvate (PEP) to the 5-hydroxyl of shikimate-3-phosphate (S3P) to produce enolpyruvyl shikimate-3-phosphate and inorganic phosphate.</text>
</comment>
<comment type="catalytic activity">
    <reaction evidence="1 3 4 6 7 8 10 11">
        <text>3-phosphoshikimate + phosphoenolpyruvate = 5-O-(1-carboxyvinyl)-3-phosphoshikimate + phosphate</text>
        <dbReference type="Rhea" id="RHEA:21256"/>
        <dbReference type="ChEBI" id="CHEBI:43474"/>
        <dbReference type="ChEBI" id="CHEBI:57701"/>
        <dbReference type="ChEBI" id="CHEBI:58702"/>
        <dbReference type="ChEBI" id="CHEBI:145989"/>
        <dbReference type="EC" id="2.5.1.19"/>
    </reaction>
    <physiologicalReaction direction="left-to-right" evidence="13">
        <dbReference type="Rhea" id="RHEA:21257"/>
    </physiologicalReaction>
</comment>
<comment type="activity regulation">
    <text evidence="3 5 6 8 9 11">Competitively inhibited by glyphosate (PubMed:12430021, PubMed:6229418). Inhibited by (S)- and (R)-phosphonates analogs of the tetrahedral reaction intermediate (PubMed:15736934). Inhibited by (R)-difluoromethyl analogs of the tetrahedral reaction intermediate (PubMed:16225867). Inhibited by bromopyruvate (PubMed:1899181).</text>
</comment>
<comment type="biophysicochemical properties">
    <kinetics>
        <KM evidence="11">0.0035 mM for S3P (at pH 7 and 25 degrees Celsius)</KM>
        <KM evidence="11">0.015 mM for PEP (at pH 7 and 25 degrees Celsius)</KM>
        <KM evidence="10">0.045 mM for PEP (at pH 7.5 and 25 degrees Celsius)</KM>
        <KM evidence="10">0.048 mM for S3P (at pH 7.5 and 25 degrees Celsius)</KM>
        <KM evidence="7">0.06 mM for PEP (at pH 7.5 and 25 degrees Celsius)</KM>
        <KM evidence="7">0.06 mM for S3P (at pH 7.5 and 25 degrees Celsius)</KM>
        <KM evidence="3">0.088 mM for PEP (at pH 6.8 and 20 degrees Celsius)</KM>
        <KM evidence="6">0.09 mM for S3P (at pH 5.5 and 20 degrees Celsius)</KM>
        <KM evidence="6">0.1 mM for PEP (at pH 5.5 and 20 degrees Celsius)</KM>
        <KM evidence="3">0.12 mM for S3P (at pH 6.8 and 20 degrees Celsius)</KM>
        <Vmax evidence="7">50.0 umol/min/ug enzyme (at pH 7.5 and 25 degrees Celsius)</Vmax>
        <Vmax evidence="6">53.0 umol/min/ug enzyme (at pH 5.5 and 20 degrees Celsius)</Vmax>
        <Vmax evidence="10">57.0 umol/min/ug enzyme (at pH 7.5 and 25 degrees Celsius)</Vmax>
    </kinetics>
    <phDependence>
        <text evidence="3 6 7 10 11">Optimum pH is between 6 and 6.5.</text>
    </phDependence>
</comment>
<comment type="pathway">
    <text evidence="1 13">Metabolic intermediate biosynthesis; chorismate biosynthesis; chorismate from D-erythrose 4-phosphate and phosphoenolpyruvate: step 6/7.</text>
</comment>
<comment type="subunit">
    <text evidence="1 11">Monomer.</text>
</comment>
<comment type="subcellular location">
    <subcellularLocation>
        <location evidence="1 13">Cytoplasm</location>
    </subcellularLocation>
</comment>
<comment type="similarity">
    <text evidence="1 13">Belongs to the EPSP synthase family.</text>
</comment>
<organism>
    <name type="scientific">Escherichia coli (strain K12)</name>
    <dbReference type="NCBI Taxonomy" id="83333"/>
    <lineage>
        <taxon>Bacteria</taxon>
        <taxon>Pseudomonadati</taxon>
        <taxon>Pseudomonadota</taxon>
        <taxon>Gammaproteobacteria</taxon>
        <taxon>Enterobacterales</taxon>
        <taxon>Enterobacteriaceae</taxon>
        <taxon>Escherichia</taxon>
    </lineage>
</organism>
<sequence length="427" mass="46096">MESLTLQPIARVDGTINLPGSKSVSNRALLLAALAHGKTVLTNLLDSDDVRHMLNALTALGVSYTLSADRTRCEIIGNGGPLHAEGALELFLGNAGTAMRPLAAALCLGSNDIVLTGEPRMKERPIGHLVDALRLGGAKITYLEQENYPPLRLQGGFTGGNVDVDGSVSSQFLTALLMTAPLAPEDTVIRIKGDLVSKPYIDITLNLMKTFGVEIENQHYQQFVVKGGQSYQSPGTYLVEGDASSASYFLAAAAIKGGTVKVTGIGRNSMQGDIRFADVLEKMGATICWGDDYISCTRGELNAIDMDMNHIPDAAMTIATAALFAKGTTTLRNIYNWRVKETDRLFAMATELRKVGAEVEEGHDYIRITPPEKLNFAEIATYNDHRMAMCFSLVALSDTPVTILDPKCTAKTFPDYFEQLARISQAA</sequence>
<reference key="1">
    <citation type="journal article" date="1984" name="FEBS Lett.">
        <title>The complete amino acid sequence of Escherichia coli 5-enolpyruvylshikimate 3-phosphate synthase.</title>
        <authorList>
            <person name="Duncan K."/>
            <person name="Lewendon A."/>
            <person name="Coggins J.R."/>
        </authorList>
    </citation>
    <scope>NUCLEOTIDE SEQUENCE [GENOMIC DNA]</scope>
</reference>
<reference key="2">
    <citation type="journal article" date="1996" name="DNA Res.">
        <title>A 718-kb DNA sequence of the Escherichia coli K-12 genome corresponding to the 12.7-28.0 min region on the linkage map.</title>
        <authorList>
            <person name="Oshima T."/>
            <person name="Aiba H."/>
            <person name="Baba T."/>
            <person name="Fujita K."/>
            <person name="Hayashi K."/>
            <person name="Honjo A."/>
            <person name="Ikemoto K."/>
            <person name="Inada T."/>
            <person name="Itoh T."/>
            <person name="Kajihara M."/>
            <person name="Kanai K."/>
            <person name="Kashimoto K."/>
            <person name="Kimura S."/>
            <person name="Kitagawa M."/>
            <person name="Makino K."/>
            <person name="Masuda S."/>
            <person name="Miki T."/>
            <person name="Mizobuchi K."/>
            <person name="Mori H."/>
            <person name="Motomura K."/>
            <person name="Nakamura Y."/>
            <person name="Nashimoto H."/>
            <person name="Nishio Y."/>
            <person name="Saito N."/>
            <person name="Sampei G."/>
            <person name="Seki Y."/>
            <person name="Tagami H."/>
            <person name="Takemoto K."/>
            <person name="Wada C."/>
            <person name="Yamamoto Y."/>
            <person name="Yano M."/>
            <person name="Horiuchi T."/>
        </authorList>
    </citation>
    <scope>NUCLEOTIDE SEQUENCE [LARGE SCALE GENOMIC DNA]</scope>
    <source>
        <strain>K12 / W3110 / ATCC 27325 / DSM 5911</strain>
    </source>
</reference>
<reference key="3">
    <citation type="journal article" date="1997" name="Science">
        <title>The complete genome sequence of Escherichia coli K-12.</title>
        <authorList>
            <person name="Blattner F.R."/>
            <person name="Plunkett G. III"/>
            <person name="Bloch C.A."/>
            <person name="Perna N.T."/>
            <person name="Burland V."/>
            <person name="Riley M."/>
            <person name="Collado-Vides J."/>
            <person name="Glasner J.D."/>
            <person name="Rode C.K."/>
            <person name="Mayhew G.F."/>
            <person name="Gregor J."/>
            <person name="Davis N.W."/>
            <person name="Kirkpatrick H.A."/>
            <person name="Goeden M.A."/>
            <person name="Rose D.J."/>
            <person name="Mau B."/>
            <person name="Shao Y."/>
        </authorList>
    </citation>
    <scope>NUCLEOTIDE SEQUENCE [LARGE SCALE GENOMIC DNA]</scope>
    <source>
        <strain>K12 / MG1655 / ATCC 47076</strain>
    </source>
</reference>
<reference key="4">
    <citation type="journal article" date="2006" name="Mol. Syst. Biol.">
        <title>Highly accurate genome sequences of Escherichia coli K-12 strains MG1655 and W3110.</title>
        <authorList>
            <person name="Hayashi K."/>
            <person name="Morooka N."/>
            <person name="Yamamoto Y."/>
            <person name="Fujita K."/>
            <person name="Isono K."/>
            <person name="Choi S."/>
            <person name="Ohtsubo E."/>
            <person name="Baba T."/>
            <person name="Wanner B.L."/>
            <person name="Mori H."/>
            <person name="Horiuchi T."/>
        </authorList>
    </citation>
    <scope>NUCLEOTIDE SEQUENCE [LARGE SCALE GENOMIC DNA]</scope>
    <source>
        <strain>K12 / W3110 / ATCC 27325 / DSM 5911</strain>
    </source>
</reference>
<reference key="5">
    <citation type="submission" date="1995-07" db="EMBL/GenBank/DDBJ databases">
        <authorList>
            <person name="Palma C.A."/>
            <person name="Allen E."/>
            <person name="Araujo R."/>
            <person name="Aparicio A.M."/>
            <person name="Botstein D."/>
            <person name="Cherry M."/>
            <person name="Chung E."/>
            <person name="Dietrich F."/>
            <person name="Duncan M."/>
            <person name="Federspiel N."/>
            <person name="Kalman S."/>
            <person name="Kim K."/>
            <person name="Komp C."/>
            <person name="Lashkari D."/>
            <person name="Lew H."/>
            <person name="Lin D."/>
            <person name="Namath A."/>
            <person name="Oefner P."/>
            <person name="Davis R."/>
        </authorList>
    </citation>
    <scope>NUCLEOTIDE SEQUENCE [GENOMIC DNA] OF 380-427</scope>
    <source>
        <strain>K12 / MG1655 / ATCC 47076</strain>
    </source>
</reference>
<reference key="6">
    <citation type="journal article" date="1984" name="FEBS Lett.">
        <title>The purification of 5-enolpyruvylshikimate 3-phosphate synthase from an overproducing strain of Escherichia coli.</title>
        <authorList>
            <person name="Duncan K."/>
            <person name="Lewendon A."/>
            <person name="Coggins J.R."/>
        </authorList>
    </citation>
    <scope>FUNCTION</scope>
    <scope>CATALYTIC ACTIVITY</scope>
    <scope>BIOPHYSICOCHEMICAL PROPERTIES</scope>
    <scope>ACTIVITY REGULATION</scope>
    <scope>SUBUNIT</scope>
</reference>
<reference key="7">
    <citation type="journal article" date="1991" name="Arch. Biochem. Biophys.">
        <title>5-enolpyruvylshikimate-3-phosphate synthase from Escherichia coli -- the substrate analogue bromopyruvate inactivates the enzyme by modifying Cys-408 and Lys-411.</title>
        <authorList>
            <person name="Huynh Q.K."/>
        </authorList>
    </citation>
    <scope>ACTIVITY REGULATION</scope>
</reference>
<reference key="8">
    <citation type="journal article" date="1993" name="Biochem. J.">
        <title>Photo-oxidation of 5-enolpyruvoylshikimate-3-phosphate synthase from Escherichia coli: evidence for a reactive imidazole group (His385) at the herbicide glyphosate-binding site.</title>
        <authorList>
            <person name="Huynh Q.K."/>
        </authorList>
    </citation>
    <scope>PHOTO-OXIDATION AT HIS-385</scope>
</reference>
<reference evidence="15" key="9">
    <citation type="journal article" date="1991" name="Proc. Natl. Acad. Sci. U.S.A.">
        <title>Structure and topological symmetry of the glyphosate target 5-enol-pyruvylshikimate-3-phosphate synthase: a distinctive protein fold.</title>
        <authorList>
            <person name="Stallings W.C."/>
            <person name="Abdel-Meguid S.S."/>
            <person name="Lim L.W."/>
            <person name="Shieh H.-S."/>
            <person name="Dayringer H.E."/>
            <person name="Leimgruber N.K."/>
            <person name="Stegeman R.A."/>
            <person name="Anderson K.S."/>
            <person name="Sikorski J.A."/>
            <person name="Padgette S.R."/>
            <person name="Kishore G.M."/>
        </authorList>
    </citation>
    <scope>X-RAY CRYSTALLOGRAPHY (3.0 ANGSTROMS)</scope>
</reference>
<reference evidence="16 17" key="10">
    <citation type="journal article" date="2001" name="Proc. Natl. Acad. Sci. U.S.A.">
        <title>Interaction of the herbicide glyphosate with its target enzyme 5-enolpyruvylshikimate 3-phosphate synthase in atomic detail.</title>
        <authorList>
            <person name="Schonbrunn E."/>
            <person name="Eschenburg S."/>
            <person name="Shuttleworth W.A."/>
            <person name="Schloss J.V."/>
            <person name="Amrhein N."/>
            <person name="Evans J.N."/>
            <person name="Kabsch W."/>
        </authorList>
    </citation>
    <scope>X-RAY CRYSTALLOGRAPHY (1.50 ANGSTROMS) IN COMPLEXES WITH SHIKIMATE-3-PHOSPHATE AND GLYPHOSATE</scope>
</reference>
<reference evidence="18" key="11">
    <citation type="journal article" date="2002" name="Planta">
        <title>How the mutation glycine96 to alanine confers glyphosate insensitivity to 5-enolpyruvyl shikimate-3-phosphate synthase from Escherichia coli.</title>
        <authorList>
            <person name="Eschenburg S."/>
            <person name="Healy M.L."/>
            <person name="Priestman M.A."/>
            <person name="Lushington G.H."/>
            <person name="Schonbrunn E."/>
        </authorList>
    </citation>
    <scope>X-RAY CRYSTALLOGRAPHY (1.70 ANGSTROMS) OF MUTANT ALA-96 IN COMPLEX WITH SHIKIMATE-3-PHOSPHATE</scope>
    <scope>FUNCTION</scope>
    <scope>CATALYTIC ACTIVITY</scope>
    <scope>MUTAGENESIS OF GLY-96</scope>
    <scope>BIOPHYSICOCHEMICAL PROPERTIES</scope>
    <scope>ACTIVITY REGULATION</scope>
</reference>
<reference evidence="20" key="12">
    <citation type="journal article" date="2003" name="J. Biol. Chem.">
        <title>A new view of the mechanisms of UDP-N-acetylglucosamine enolpyruvyl transferase (MurA) and 5-enolpyruvylshikimate-3-phosphate synthase (AroA) derived from X-ray structures of their tetrahedral reaction intermediate states.</title>
        <authorList>
            <person name="Eschenburg S."/>
            <person name="Kabsch W."/>
            <person name="Healy M.L."/>
            <person name="Schonbrunn E."/>
        </authorList>
    </citation>
    <scope>X-RAY CRYSTALLOGRAPHY (1.60 ANGSTROMS) OF MUTANT ALA-313 IN COMPLEX WITH A REACTION INTERMEDIATE</scope>
    <scope>FUNCTION</scope>
    <scope>CATALYTIC ACTIVITY</scope>
    <scope>MUTAGENESIS OF ASP-313</scope>
    <scope>ACTIVE SITE</scope>
    <scope>REACTION MECHANISM</scope>
</reference>
<reference evidence="19" key="13">
    <citation type="submission" date="2003-05" db="PDB data bank">
        <title>Letter: Substrate-induced structural changes to the isolated N-terminal domain of 5-enolpyruvylshikimate-3-phosphate synthase.</title>
        <authorList>
            <person name="Young J.K."/>
            <person name="Stauffer M.E."/>
            <person name="Kim H.J."/>
            <person name="Helms G.L."/>
            <person name="Evans J.N.S."/>
        </authorList>
    </citation>
    <scope>STRUCTURE BY NMR OF 25-240</scope>
</reference>
<reference evidence="21 22" key="14">
    <citation type="journal article" date="2005" name="Biochemistry">
        <title>Interaction of phosphonate analogues of the tetrahedral reaction intermediate with 5-enolpyruvylshikimate-3-phosphate synthase in atomic detail.</title>
        <authorList>
            <person name="Priestman M.A."/>
            <person name="Healy M.L."/>
            <person name="Becker A."/>
            <person name="Alberg D.G."/>
            <person name="Bartlett P.A."/>
            <person name="Lushington G.H."/>
            <person name="Schonbrunn E."/>
        </authorList>
    </citation>
    <scope>X-RAY CRYSTALLOGRAPHY (1.50 ANGSTROMS) IN COMPLEX WITH TETRAHEDRAL REACTION INTERMEDIATE ANALOGS</scope>
    <scope>ACTIVITY REGULATION</scope>
</reference>
<reference evidence="23 24" key="15">
    <citation type="journal article" date="2005" name="FEBS Lett.">
        <title>Molecular basis for the glyphosate-insensitivity of the reaction of 5-enolpyruvylshikimate 3-phosphate synthase with shikimate.</title>
        <authorList>
            <person name="Priestman M.A."/>
            <person name="Healy M.L."/>
            <person name="Funke T."/>
            <person name="Becker A."/>
            <person name="Schonbrunn E."/>
        </authorList>
    </citation>
    <scope>X-RAY CRYSTALLOGRAPHY (1.50 ANGSTROMS) IN COMPLEXES WITH SHIKIMATE AND GLYPHOSATE</scope>
    <scope>FUNCTION</scope>
    <scope>CATALYTIC ACTIVITY</scope>
    <scope>BIOPHYSICOCHEMICAL PROPERTIES</scope>
</reference>
<reference evidence="25" key="16">
    <citation type="journal article" date="2007" name="Biochemistry">
        <title>Differential inhibition of class I and class II 5-enolpyruvylshikimate-3-phosphate synthases by tetrahedral reaction intermediate analogues.</title>
        <authorList>
            <person name="Funke T."/>
            <person name="Healy-Fried M.L."/>
            <person name="Han H."/>
            <person name="Alberg D.G."/>
            <person name="Bartlett P.A."/>
            <person name="Schonbrunn E."/>
        </authorList>
    </citation>
    <scope>X-RAY CRYSTALLOGRAPHY (1.60 ANGSTROMS) IN COMPLEX WITH A TETRAHEDRAL REACTION INTERMEDIATE ANALOG</scope>
    <scope>FUNCTION</scope>
    <scope>ACTIVE SITE</scope>
    <scope>ACTIVITY REGULATION</scope>
</reference>
<reference evidence="26 27 28 29" key="17">
    <citation type="journal article" date="2007" name="J. Biol. Chem.">
        <title>Structural basis of glyphosate tolerance resulting from mutations of Pro101 in Escherichia coli 5-enolpyruvylshikimate-3-phosphate synthase.</title>
        <authorList>
            <person name="Healy-Fried M.L."/>
            <person name="Funke T."/>
            <person name="Priestman M.A."/>
            <person name="Han H."/>
            <person name="Schonbrunn E."/>
        </authorList>
    </citation>
    <scope>X-RAY CRYSTALLOGRAPHY (1.50 ANGSTROMS) OF MUTANTS LEU-101 AND SER-101 IN COMPLEXES WITH SHIKIMATE-3-PHOSPHATE AND GLYPHOSATE</scope>
    <scope>FUNCTION</scope>
    <scope>CATALYTIC ACTIVITY</scope>
    <scope>MUTAGENESIS OF PRO-101</scope>
    <scope>ACTIVE SITE</scope>
    <scope>BIOPHYSICOCHEMICAL PROPERTIES</scope>
</reference>
<reference evidence="30 31 32 33" key="18">
    <citation type="journal article" date="2009" name="J. Biol. Chem.">
        <title>Structural basis of glyphosate resistance resulting from the double mutation Thr97 -&gt; Ile and Pro101 -&gt; Ser in 5-enolpyruvylshikimate-3-phosphate synthase from Escherichia coli.</title>
        <authorList>
            <person name="Funke T."/>
            <person name="Yang Y."/>
            <person name="Han H."/>
            <person name="Healy-Fried M."/>
            <person name="Olesen S."/>
            <person name="Becker A."/>
            <person name="Schonbrunn E."/>
        </authorList>
    </citation>
    <scope>X-RAY CRYSTALLOGRAPHY (1.70 ANGSTROMS) OF MUTANTS ILE-97 AND ILE-97/SER-101 IN COMPLEXES WITH SHIKIMATE-3-PHOSPHATE AND GLYPHOSATE</scope>
    <scope>FUNCTION</scope>
    <scope>CATALYTIC ACTIVITY</scope>
    <scope>MUTAGENESIS OF THR-97 AND PRO-101</scope>
    <scope>BIOPHYSICOCHEMICAL PROPERTIES</scope>
</reference>